<gene>
    <name type="primary">lytS</name>
    <name type="ordered locus">SAB0199</name>
</gene>
<organism>
    <name type="scientific">Staphylococcus aureus (strain bovine RF122 / ET3-1)</name>
    <dbReference type="NCBI Taxonomy" id="273036"/>
    <lineage>
        <taxon>Bacteria</taxon>
        <taxon>Bacillati</taxon>
        <taxon>Bacillota</taxon>
        <taxon>Bacilli</taxon>
        <taxon>Bacillales</taxon>
        <taxon>Staphylococcaceae</taxon>
        <taxon>Staphylococcus</taxon>
    </lineage>
</organism>
<proteinExistence type="inferred from homology"/>
<feature type="chain" id="PRO_0000292214" description="Sensor histidine kinase/phosphatase LytS">
    <location>
        <begin position="1"/>
        <end position="584"/>
    </location>
</feature>
<feature type="transmembrane region" description="Helical" evidence="3">
    <location>
        <begin position="2"/>
        <end position="22"/>
    </location>
</feature>
<feature type="transmembrane region" description="Helical" evidence="3">
    <location>
        <begin position="42"/>
        <end position="62"/>
    </location>
</feature>
<feature type="transmembrane region" description="Helical" evidence="3">
    <location>
        <begin position="92"/>
        <end position="112"/>
    </location>
</feature>
<feature type="transmembrane region" description="Helical" evidence="3">
    <location>
        <begin position="121"/>
        <end position="141"/>
    </location>
</feature>
<feature type="transmembrane region" description="Helical" evidence="3">
    <location>
        <begin position="154"/>
        <end position="174"/>
    </location>
</feature>
<feature type="transmembrane region" description="Helical" evidence="3">
    <location>
        <begin position="186"/>
        <end position="206"/>
    </location>
</feature>
<feature type="domain" description="GAF">
    <location>
        <begin position="311"/>
        <end position="363"/>
    </location>
</feature>
<feature type="domain" description="Histidine kinase">
    <location>
        <begin position="379"/>
        <end position="461"/>
    </location>
</feature>
<feature type="modified residue" description="Phosphohistidine; by autocatalysis" evidence="1">
    <location>
        <position position="390"/>
    </location>
</feature>
<name>LYTS_STAAB</name>
<protein>
    <recommendedName>
        <fullName>Sensor histidine kinase/phosphatase LytS</fullName>
        <ecNumber evidence="2">2.7.13.3</ecNumber>
        <ecNumber evidence="2">3.1.3.-</ecNumber>
    </recommendedName>
    <alternativeName>
        <fullName>Autolysin sensor kinase</fullName>
    </alternativeName>
</protein>
<accession>Q2YV68</accession>
<reference key="1">
    <citation type="journal article" date="2007" name="PLoS ONE">
        <title>Molecular correlates of host specialization in Staphylococcus aureus.</title>
        <authorList>
            <person name="Herron-Olson L."/>
            <person name="Fitzgerald J.R."/>
            <person name="Musser J.M."/>
            <person name="Kapur V."/>
        </authorList>
    </citation>
    <scope>NUCLEOTIDE SEQUENCE [LARGE SCALE GENOMIC DNA]</scope>
    <source>
        <strain>bovine RF122 / ET3-1</strain>
    </source>
</reference>
<sequence length="584" mass="64946">MLSLTMLLLERVGLIIILAYVLMNIPYFKNLMNRRRTWKARCQLCIIFSLFALMSNLTGIVIDHQHSLSGSVYFRLDDDVSLANTRVLTIGVAGLVGGPFVGLFVGVISGIFRVYMGGADAQVYLISSIFIGIIAGYFGLQAQRRKRYPSIAKSAMIGIVMEMIQMLSILTFSHDKAYAVDLISLIALPMIIVNSVGTAIFMSIIISTLKQEEQMKAVQTHDVLQLMNQTLPYFKEGLNRESAQQIAMIIKNLMKVSAVAITSKNEILSHVGAGSDHHIPTNEILTSLSKDVLKSGKLKEVHTKEEIGCSHPNCPLRAAIVIPLEMHGSIVGTLKMYFTNPNDLTFVERQLAEGLANIFSSQIELGEAETQSKLLKDAEIKSLQAQVSPHFFFNSINTISALVRINSEKARELLLELSYFFRANLQGSKQHTITLDKELSQVRAYLSLEQARYPGRFNININVEDKYRDVLVPPFLIQILVENAIKHAFTNRKQGNDIDVSVIKETATHVRIIVQDNGQGISKDKMHLLGETSVESESGTGSALENLNLRLKGLFGKSAALQFESTSSGTTFWCVLPYERQEEE</sequence>
<keyword id="KW-0067">ATP-binding</keyword>
<keyword id="KW-1003">Cell membrane</keyword>
<keyword id="KW-0378">Hydrolase</keyword>
<keyword id="KW-0418">Kinase</keyword>
<keyword id="KW-0472">Membrane</keyword>
<keyword id="KW-0547">Nucleotide-binding</keyword>
<keyword id="KW-0597">Phosphoprotein</keyword>
<keyword id="KW-0808">Transferase</keyword>
<keyword id="KW-0812">Transmembrane</keyword>
<keyword id="KW-1133">Transmembrane helix</keyword>
<keyword id="KW-0902">Two-component regulatory system</keyword>
<comment type="function">
    <text evidence="2">Member of the two-component regulatory system LytR/LytS that regulates genes involved in autolysis, programmed cell death, biofilm formation and cell wall metabolism. Also participates in sensing and responding to host defense cationic antimicrobial peptides (HDPs). Functions as a sensor protein kinase which is autophosphorylated at a histidine residue and transfers its phosphate group to the conserved aspartic acid residue in the regulatory domain of LytR. In turn, LytR binds to the upstream promoter regions of target genes including lrgA and lrgB, to positively regulate their expression. Also possesses a phosphatase activity that dephosphorylates and thus inactivates LytR.</text>
</comment>
<comment type="catalytic activity">
    <reaction evidence="2">
        <text>ATP + protein L-histidine = ADP + protein N-phospho-L-histidine.</text>
        <dbReference type="EC" id="2.7.13.3"/>
    </reaction>
</comment>
<comment type="subcellular location">
    <subcellularLocation>
        <location evidence="1">Cell membrane</location>
        <topology evidence="1">Multi-pass membrane protein</topology>
    </subcellularLocation>
</comment>
<comment type="PTM">
    <text evidence="2">Autophosphorylated on His-390.</text>
</comment>
<evidence type="ECO:0000250" key="1"/>
<evidence type="ECO:0000250" key="2">
    <source>
        <dbReference type="UniProtKB" id="Q53705"/>
    </source>
</evidence>
<evidence type="ECO:0000255" key="3"/>
<dbReference type="EC" id="2.7.13.3" evidence="2"/>
<dbReference type="EC" id="3.1.3.-" evidence="2"/>
<dbReference type="EMBL" id="AJ938182">
    <property type="protein sequence ID" value="CAI79887.1"/>
    <property type="molecule type" value="Genomic_DNA"/>
</dbReference>
<dbReference type="RefSeq" id="WP_011382166.1">
    <property type="nucleotide sequence ID" value="NC_007622.1"/>
</dbReference>
<dbReference type="SMR" id="Q2YV68"/>
<dbReference type="KEGG" id="sab:SAB0199"/>
<dbReference type="HOGENOM" id="CLU_020473_3_3_9"/>
<dbReference type="GO" id="GO:0005886">
    <property type="term" value="C:plasma membrane"/>
    <property type="evidence" value="ECO:0007669"/>
    <property type="project" value="UniProtKB-SubCell"/>
</dbReference>
<dbReference type="GO" id="GO:0005524">
    <property type="term" value="F:ATP binding"/>
    <property type="evidence" value="ECO:0007669"/>
    <property type="project" value="UniProtKB-KW"/>
</dbReference>
<dbReference type="GO" id="GO:0016787">
    <property type="term" value="F:hydrolase activity"/>
    <property type="evidence" value="ECO:0007669"/>
    <property type="project" value="UniProtKB-KW"/>
</dbReference>
<dbReference type="GO" id="GO:0000155">
    <property type="term" value="F:phosphorelay sensor kinase activity"/>
    <property type="evidence" value="ECO:0007669"/>
    <property type="project" value="InterPro"/>
</dbReference>
<dbReference type="GO" id="GO:0071555">
    <property type="term" value="P:cell wall organization"/>
    <property type="evidence" value="ECO:0007669"/>
    <property type="project" value="InterPro"/>
</dbReference>
<dbReference type="CDD" id="cd16957">
    <property type="entry name" value="HATPase_LytS-like"/>
    <property type="match status" value="1"/>
</dbReference>
<dbReference type="Gene3D" id="1.10.1760.20">
    <property type="match status" value="1"/>
</dbReference>
<dbReference type="Gene3D" id="3.30.450.40">
    <property type="match status" value="1"/>
</dbReference>
<dbReference type="Gene3D" id="3.30.565.10">
    <property type="entry name" value="Histidine kinase-like ATPase, C-terminal domain"/>
    <property type="match status" value="1"/>
</dbReference>
<dbReference type="InterPro" id="IPR050640">
    <property type="entry name" value="Bact_2-comp_sensor_kinase"/>
</dbReference>
<dbReference type="InterPro" id="IPR003018">
    <property type="entry name" value="GAF"/>
</dbReference>
<dbReference type="InterPro" id="IPR029016">
    <property type="entry name" value="GAF-like_dom_sf"/>
</dbReference>
<dbReference type="InterPro" id="IPR036890">
    <property type="entry name" value="HATPase_C_sf"/>
</dbReference>
<dbReference type="InterPro" id="IPR010559">
    <property type="entry name" value="Sig_transdc_His_kin_internal"/>
</dbReference>
<dbReference type="InterPro" id="IPR011620">
    <property type="entry name" value="Sig_transdc_His_kinase_LytS_TM"/>
</dbReference>
<dbReference type="PANTHER" id="PTHR34220">
    <property type="entry name" value="SENSOR HISTIDINE KINASE YPDA"/>
    <property type="match status" value="1"/>
</dbReference>
<dbReference type="PANTHER" id="PTHR34220:SF7">
    <property type="entry name" value="SENSOR HISTIDINE KINASE YPDA"/>
    <property type="match status" value="1"/>
</dbReference>
<dbReference type="Pfam" id="PF07694">
    <property type="entry name" value="5TM-5TMR_LYT"/>
    <property type="match status" value="1"/>
</dbReference>
<dbReference type="Pfam" id="PF02518">
    <property type="entry name" value="HATPase_c"/>
    <property type="match status" value="1"/>
</dbReference>
<dbReference type="Pfam" id="PF06580">
    <property type="entry name" value="His_kinase"/>
    <property type="match status" value="1"/>
</dbReference>
<dbReference type="SMART" id="SM00065">
    <property type="entry name" value="GAF"/>
    <property type="match status" value="1"/>
</dbReference>
<dbReference type="SMART" id="SM00387">
    <property type="entry name" value="HATPase_c"/>
    <property type="match status" value="1"/>
</dbReference>
<dbReference type="SUPFAM" id="SSF55874">
    <property type="entry name" value="ATPase domain of HSP90 chaperone/DNA topoisomerase II/histidine kinase"/>
    <property type="match status" value="1"/>
</dbReference>
<dbReference type="SUPFAM" id="SSF55781">
    <property type="entry name" value="GAF domain-like"/>
    <property type="match status" value="1"/>
</dbReference>